<reference key="1">
    <citation type="journal article" date="2002" name="Lancet">
        <title>Genome and virulence determinants of high virulence community-acquired MRSA.</title>
        <authorList>
            <person name="Baba T."/>
            <person name="Takeuchi F."/>
            <person name="Kuroda M."/>
            <person name="Yuzawa H."/>
            <person name="Aoki K."/>
            <person name="Oguchi A."/>
            <person name="Nagai Y."/>
            <person name="Iwama N."/>
            <person name="Asano K."/>
            <person name="Naimi T."/>
            <person name="Kuroda H."/>
            <person name="Cui L."/>
            <person name="Yamamoto K."/>
            <person name="Hiramatsu K."/>
        </authorList>
    </citation>
    <scope>NUCLEOTIDE SEQUENCE [LARGE SCALE GENOMIC DNA]</scope>
    <source>
        <strain>MW2</strain>
    </source>
</reference>
<comment type="function">
    <text evidence="1">Toxin that seems to act by forming pores in the membrane of the cell. Has a hemolytic and a leucotoxic activity (By similarity).</text>
</comment>
<comment type="subunit">
    <text evidence="1">Toxicity requires sequential binding and synergistic association of a class S and a class F component which form heterooligomeric complexes. HlgC (class S) associates with HlgB (class F) thus forming an CB toxin (By similarity).</text>
</comment>
<comment type="similarity">
    <text evidence="3">Belongs to the aerolysin family.</text>
</comment>
<evidence type="ECO:0000250" key="1"/>
<evidence type="ECO:0000255" key="2"/>
<evidence type="ECO:0000305" key="3"/>
<sequence length="315" mass="35584">MLKNKILATTLSVSLLAPLANPLLENAKAANDTEDIGKGSDIEIIKRTEDKTSNKWGVTQNIQFDFVKDKKYNKDALILKMQGFISSRTTYYNYKKTNHVKAMRWPFQYNIGLKTNDKYVSLINYLPKNKIESTNVSQTLGYNIGGNFQSAPSLGGNGSFNYSKSISYTQQNYVSEVEQQNSKSVLWGVKANSFATESGQKSAFDSDLFVGYKPHSKDPRDYFVPDSELPPLVQSGFNPSFIATVSHEKGSSDTSEFEITYGRNMDVTHAIKRSTHYGNSYLDGHRVHNAFVNRNYTVKYEVNWKTHEIKVKGQN</sequence>
<keyword id="KW-0204">Cytolysis</keyword>
<keyword id="KW-0354">Hemolysis</keyword>
<keyword id="KW-0732">Signal</keyword>
<keyword id="KW-0800">Toxin</keyword>
<keyword id="KW-0843">Virulence</keyword>
<gene>
    <name type="primary">hlgC</name>
    <name type="ordered locus">MW2343</name>
</gene>
<proteinExistence type="inferred from homology"/>
<protein>
    <recommendedName>
        <fullName>Gamma-hemolysin component C</fullName>
    </recommendedName>
</protein>
<dbReference type="EMBL" id="BA000033">
    <property type="protein sequence ID" value="BAB96208.1"/>
    <property type="molecule type" value="Genomic_DNA"/>
</dbReference>
<dbReference type="RefSeq" id="WP_000916704.1">
    <property type="nucleotide sequence ID" value="NC_003923.1"/>
</dbReference>
<dbReference type="SMR" id="Q7A019"/>
<dbReference type="KEGG" id="sam:MW2343"/>
<dbReference type="HOGENOM" id="CLU_075311_0_0_9"/>
<dbReference type="GO" id="GO:0005576">
    <property type="term" value="C:extracellular region"/>
    <property type="evidence" value="ECO:0007669"/>
    <property type="project" value="InterPro"/>
</dbReference>
<dbReference type="GO" id="GO:0090729">
    <property type="term" value="F:toxin activity"/>
    <property type="evidence" value="ECO:0007669"/>
    <property type="project" value="UniProtKB-KW"/>
</dbReference>
<dbReference type="GO" id="GO:0051715">
    <property type="term" value="P:cytolysis in another organism"/>
    <property type="evidence" value="ECO:0007669"/>
    <property type="project" value="InterPro"/>
</dbReference>
<dbReference type="Gene3D" id="2.70.240.10">
    <property type="entry name" value="Leukocidin/porin MspA"/>
    <property type="match status" value="1"/>
</dbReference>
<dbReference type="InterPro" id="IPR003963">
    <property type="entry name" value="Bi-component_toxin_staph"/>
</dbReference>
<dbReference type="InterPro" id="IPR016183">
    <property type="entry name" value="Leukocidin/Hemolysin_toxin"/>
</dbReference>
<dbReference type="InterPro" id="IPR036435">
    <property type="entry name" value="Leukocidin/porin_MspA_sf"/>
</dbReference>
<dbReference type="NCBIfam" id="TIGR01002">
    <property type="entry name" value="hlyII"/>
    <property type="match status" value="1"/>
</dbReference>
<dbReference type="Pfam" id="PF07968">
    <property type="entry name" value="Leukocidin"/>
    <property type="match status" value="1"/>
</dbReference>
<dbReference type="PRINTS" id="PR01468">
    <property type="entry name" value="BICOMPNTOXIN"/>
</dbReference>
<dbReference type="SUPFAM" id="SSF56959">
    <property type="entry name" value="Leukocidin-like"/>
    <property type="match status" value="1"/>
</dbReference>
<name>HLGC_STAAW</name>
<feature type="signal peptide" evidence="2">
    <location>
        <begin position="1"/>
        <end position="29"/>
    </location>
</feature>
<feature type="chain" id="PRO_0000045225" description="Gamma-hemolysin component C">
    <location>
        <begin position="30"/>
        <end position="315"/>
    </location>
</feature>
<accession>Q7A019</accession>
<organism>
    <name type="scientific">Staphylococcus aureus (strain MW2)</name>
    <dbReference type="NCBI Taxonomy" id="196620"/>
    <lineage>
        <taxon>Bacteria</taxon>
        <taxon>Bacillati</taxon>
        <taxon>Bacillota</taxon>
        <taxon>Bacilli</taxon>
        <taxon>Bacillales</taxon>
        <taxon>Staphylococcaceae</taxon>
        <taxon>Staphylococcus</taxon>
    </lineage>
</organism>